<name>COBQ_LISMH</name>
<evidence type="ECO:0000255" key="1">
    <source>
        <dbReference type="HAMAP-Rule" id="MF_00028"/>
    </source>
</evidence>
<reference key="1">
    <citation type="journal article" date="2011" name="J. Bacteriol.">
        <title>Genome sequence of lineage III Listeria monocytogenes strain HCC23.</title>
        <authorList>
            <person name="Steele C.L."/>
            <person name="Donaldson J.R."/>
            <person name="Paul D."/>
            <person name="Banes M.M."/>
            <person name="Arick T."/>
            <person name="Bridges S.M."/>
            <person name="Lawrence M.L."/>
        </authorList>
    </citation>
    <scope>NUCLEOTIDE SEQUENCE [LARGE SCALE GENOMIC DNA]</scope>
    <source>
        <strain>HCC23</strain>
    </source>
</reference>
<accession>B8D9Y4</accession>
<dbReference type="EMBL" id="CP001175">
    <property type="protein sequence ID" value="ACK39788.1"/>
    <property type="molecule type" value="Genomic_DNA"/>
</dbReference>
<dbReference type="RefSeq" id="WP_012581506.1">
    <property type="nucleotide sequence ID" value="NC_011660.1"/>
</dbReference>
<dbReference type="SMR" id="B8D9Y4"/>
<dbReference type="KEGG" id="lmh:LMHCC_1443"/>
<dbReference type="HOGENOM" id="CLU_019250_2_2_9"/>
<dbReference type="UniPathway" id="UPA00148"/>
<dbReference type="GO" id="GO:0015420">
    <property type="term" value="F:ABC-type vitamin B12 transporter activity"/>
    <property type="evidence" value="ECO:0007669"/>
    <property type="project" value="UniProtKB-UniRule"/>
</dbReference>
<dbReference type="GO" id="GO:0003824">
    <property type="term" value="F:catalytic activity"/>
    <property type="evidence" value="ECO:0007669"/>
    <property type="project" value="InterPro"/>
</dbReference>
<dbReference type="GO" id="GO:0009236">
    <property type="term" value="P:cobalamin biosynthetic process"/>
    <property type="evidence" value="ECO:0007669"/>
    <property type="project" value="UniProtKB-UniRule"/>
</dbReference>
<dbReference type="CDD" id="cd05389">
    <property type="entry name" value="CobQ_N"/>
    <property type="match status" value="1"/>
</dbReference>
<dbReference type="CDD" id="cd01750">
    <property type="entry name" value="GATase1_CobQ"/>
    <property type="match status" value="1"/>
</dbReference>
<dbReference type="Gene3D" id="3.40.50.880">
    <property type="match status" value="1"/>
</dbReference>
<dbReference type="Gene3D" id="3.40.50.300">
    <property type="entry name" value="P-loop containing nucleotide triphosphate hydrolases"/>
    <property type="match status" value="1"/>
</dbReference>
<dbReference type="HAMAP" id="MF_00028">
    <property type="entry name" value="CobQ"/>
    <property type="match status" value="1"/>
</dbReference>
<dbReference type="InterPro" id="IPR029062">
    <property type="entry name" value="Class_I_gatase-like"/>
</dbReference>
<dbReference type="InterPro" id="IPR002586">
    <property type="entry name" value="CobQ/CobB/MinD/ParA_Nub-bd_dom"/>
</dbReference>
<dbReference type="InterPro" id="IPR033949">
    <property type="entry name" value="CobQ_GATase1"/>
</dbReference>
<dbReference type="InterPro" id="IPR047045">
    <property type="entry name" value="CobQ_N"/>
</dbReference>
<dbReference type="InterPro" id="IPR004459">
    <property type="entry name" value="CobQ_synth"/>
</dbReference>
<dbReference type="InterPro" id="IPR011698">
    <property type="entry name" value="GATase_3"/>
</dbReference>
<dbReference type="InterPro" id="IPR027417">
    <property type="entry name" value="P-loop_NTPase"/>
</dbReference>
<dbReference type="NCBIfam" id="TIGR00313">
    <property type="entry name" value="cobQ"/>
    <property type="match status" value="1"/>
</dbReference>
<dbReference type="NCBIfam" id="NF001989">
    <property type="entry name" value="PRK00784.1"/>
    <property type="match status" value="1"/>
</dbReference>
<dbReference type="PANTHER" id="PTHR21343:SF1">
    <property type="entry name" value="COBYRIC ACID SYNTHASE"/>
    <property type="match status" value="1"/>
</dbReference>
<dbReference type="PANTHER" id="PTHR21343">
    <property type="entry name" value="DETHIOBIOTIN SYNTHETASE"/>
    <property type="match status" value="1"/>
</dbReference>
<dbReference type="Pfam" id="PF01656">
    <property type="entry name" value="CbiA"/>
    <property type="match status" value="1"/>
</dbReference>
<dbReference type="Pfam" id="PF07685">
    <property type="entry name" value="GATase_3"/>
    <property type="match status" value="1"/>
</dbReference>
<dbReference type="SUPFAM" id="SSF52317">
    <property type="entry name" value="Class I glutamine amidotransferase-like"/>
    <property type="match status" value="1"/>
</dbReference>
<dbReference type="SUPFAM" id="SSF52540">
    <property type="entry name" value="P-loop containing nucleoside triphosphate hydrolases"/>
    <property type="match status" value="1"/>
</dbReference>
<dbReference type="PROSITE" id="PS51274">
    <property type="entry name" value="GATASE_COBBQ"/>
    <property type="match status" value="1"/>
</dbReference>
<proteinExistence type="inferred from homology"/>
<comment type="function">
    <text evidence="1">Catalyzes amidations at positions B, D, E, and G on adenosylcobyrinic A,C-diamide. NH(2) groups are provided by glutamine, and one molecule of ATP is hydrogenolyzed for each amidation.</text>
</comment>
<comment type="pathway">
    <text evidence="1">Cofactor biosynthesis; adenosylcobalamin biosynthesis.</text>
</comment>
<comment type="similarity">
    <text evidence="1">Belongs to the CobB/CobQ family. CobQ subfamily.</text>
</comment>
<feature type="chain" id="PRO_1000116907" description="Cobyric acid synthase">
    <location>
        <begin position="1"/>
        <end position="511"/>
    </location>
</feature>
<feature type="domain" description="GATase cobBQ-type" evidence="1">
    <location>
        <begin position="251"/>
        <end position="443"/>
    </location>
</feature>
<feature type="active site" description="Nucleophile" evidence="1">
    <location>
        <position position="332"/>
    </location>
</feature>
<feature type="active site" evidence="1">
    <location>
        <position position="435"/>
    </location>
</feature>
<organism>
    <name type="scientific">Listeria monocytogenes serotype 4a (strain HCC23)</name>
    <dbReference type="NCBI Taxonomy" id="552536"/>
    <lineage>
        <taxon>Bacteria</taxon>
        <taxon>Bacillati</taxon>
        <taxon>Bacillota</taxon>
        <taxon>Bacilli</taxon>
        <taxon>Bacillales</taxon>
        <taxon>Listeriaceae</taxon>
        <taxon>Listeria</taxon>
    </lineage>
</organism>
<sequence length="511" mass="56277">MVKQIMIQGTASDAGKSVLVAGLCRLFKNKGKQVVPFKSQNMSLNSFITVTGDEMGRAQVFQAEAAGVFPDVRMNPVLLKPTNDRQSQVIFMGAILDNMDAVTYHDFKQTLIPKIQAVYQSLADENDIIVLEGAGSPAEINLNDRDIVNMGMAKMVDAPVVLVADIDKGGVFASIYGTIMLLNEEERARIKGVIINKFRGDVALLQPGIDMIEELTNVPVIGVIPYANLQLEEEDSVSLSGKNYAPDSNALLDIAIICLPRISNFTDFHSLEIQPEISLRYIRNLADFGKPDLVIIPGSKNTLEDMAFLEESGLKKAIQNFAENAGKVIGICGGYQMLGQKMLDPNQVESRQLEIAGLGLLDTETIFLEQKRTTQITGVTHSGEAVEGYEIHMGETKRGESTSPFCKIKAVNGNEETHQDGAISANKNIIGTYIHGIFDNDVFLGNLFDELLTRKNQSIYPHEIINLKEHKEQEYDKLAALLEANIQMDQLEKIMKGEKICVSTQKPAIKE</sequence>
<gene>
    <name evidence="1" type="primary">cobQ</name>
    <name type="ordered locus">LMHCC_1443</name>
</gene>
<protein>
    <recommendedName>
        <fullName evidence="1">Cobyric acid synthase</fullName>
    </recommendedName>
</protein>
<keyword id="KW-0169">Cobalamin biosynthesis</keyword>
<keyword id="KW-0315">Glutamine amidotransferase</keyword>